<dbReference type="EMBL" id="U35048">
    <property type="protein sequence ID" value="AAC50566.1"/>
    <property type="molecule type" value="mRNA"/>
</dbReference>
<dbReference type="EMBL" id="D38585">
    <property type="protein sequence ID" value="BAA07598.1"/>
    <property type="molecule type" value="mRNA"/>
</dbReference>
<dbReference type="EMBL" id="AJ222700">
    <property type="protein sequence ID" value="CAA10951.1"/>
    <property type="molecule type" value="mRNA"/>
</dbReference>
<dbReference type="EMBL" id="D87061">
    <property type="protein sequence ID" value="BAB46917.1"/>
    <property type="molecule type" value="mRNA"/>
</dbReference>
<dbReference type="EMBL" id="AF256226">
    <property type="protein sequence ID" value="AAG53077.1"/>
    <property type="molecule type" value="Genomic_DNA"/>
</dbReference>
<dbReference type="EMBL" id="AB082525">
    <property type="protein sequence ID" value="BAC02703.1"/>
    <property type="status" value="ALT_INIT"/>
    <property type="molecule type" value="mRNA"/>
</dbReference>
<dbReference type="EMBL" id="AK091854">
    <property type="protein sequence ID" value="BAG52429.1"/>
    <property type="molecule type" value="mRNA"/>
</dbReference>
<dbReference type="EMBL" id="AK312345">
    <property type="protein sequence ID" value="BAG35266.1"/>
    <property type="molecule type" value="mRNA"/>
</dbReference>
<dbReference type="EMBL" id="CR456711">
    <property type="protein sequence ID" value="CAG32992.1"/>
    <property type="molecule type" value="mRNA"/>
</dbReference>
<dbReference type="EMBL" id="CR627459">
    <property type="protein sequence ID" value="CAH10539.1"/>
    <property type="molecule type" value="mRNA"/>
</dbReference>
<dbReference type="EMBL" id="AL138960">
    <property type="status" value="NOT_ANNOTATED_CDS"/>
    <property type="molecule type" value="Genomic_DNA"/>
</dbReference>
<dbReference type="EMBL" id="AL139184">
    <property type="status" value="NOT_ANNOTATED_CDS"/>
    <property type="molecule type" value="Genomic_DNA"/>
</dbReference>
<dbReference type="EMBL" id="AL356107">
    <property type="status" value="NOT_ANNOTATED_CDS"/>
    <property type="molecule type" value="Genomic_DNA"/>
</dbReference>
<dbReference type="EMBL" id="KF455773">
    <property type="status" value="NOT_ANNOTATED_CDS"/>
    <property type="molecule type" value="Genomic_DNA"/>
</dbReference>
<dbReference type="EMBL" id="CH471075">
    <property type="protein sequence ID" value="EAX08710.1"/>
    <property type="molecule type" value="Genomic_DNA"/>
</dbReference>
<dbReference type="EMBL" id="BC000456">
    <property type="protein sequence ID" value="AAH00456.1"/>
    <property type="molecule type" value="mRNA"/>
</dbReference>
<dbReference type="EMBL" id="BC016867">
    <property type="protein sequence ID" value="AAH16867.1"/>
    <property type="molecule type" value="mRNA"/>
</dbReference>
<dbReference type="EMBL" id="BC069207">
    <property type="protein sequence ID" value="AAH69207.1"/>
    <property type="molecule type" value="mRNA"/>
</dbReference>
<dbReference type="EMBL" id="BC105277">
    <property type="protein sequence ID" value="AAI05278.1"/>
    <property type="molecule type" value="mRNA"/>
</dbReference>
<dbReference type="EMBL" id="BC136475">
    <property type="protein sequence ID" value="AAI36476.1"/>
    <property type="molecule type" value="mRNA"/>
</dbReference>
<dbReference type="EMBL" id="BC136482">
    <property type="protein sequence ID" value="AAI36483.1"/>
    <property type="molecule type" value="mRNA"/>
</dbReference>
<dbReference type="EMBL" id="BC146664">
    <property type="protein sequence ID" value="AAI46665.1"/>
    <property type="molecule type" value="mRNA"/>
</dbReference>
<dbReference type="EMBL" id="BC146679">
    <property type="protein sequence ID" value="AAI46680.1"/>
    <property type="molecule type" value="mRNA"/>
</dbReference>
<dbReference type="CCDS" id="CCDS31966.1">
    <molecule id="Q15714-1"/>
</dbReference>
<dbReference type="CCDS" id="CCDS58291.1">
    <molecule id="Q15714-4"/>
</dbReference>
<dbReference type="CCDS" id="CCDS73565.1">
    <molecule id="Q15714-5"/>
</dbReference>
<dbReference type="CCDS" id="CCDS9392.1">
    <molecule id="Q15714-2"/>
</dbReference>
<dbReference type="PIR" id="JC4813">
    <property type="entry name" value="JC4813"/>
</dbReference>
<dbReference type="RefSeq" id="NP_001230726.1">
    <molecule id="Q15714-5"/>
    <property type="nucleotide sequence ID" value="NM_001243797.2"/>
</dbReference>
<dbReference type="RefSeq" id="NP_001230727.1">
    <molecule id="Q15714-5"/>
    <property type="nucleotide sequence ID" value="NM_001243798.2"/>
</dbReference>
<dbReference type="RefSeq" id="NP_001230728.1">
    <molecule id="Q15714-4"/>
    <property type="nucleotide sequence ID" value="NM_001243799.1"/>
</dbReference>
<dbReference type="RefSeq" id="NP_006013.1">
    <molecule id="Q15714-2"/>
    <property type="nucleotide sequence ID" value="NM_006022.4"/>
</dbReference>
<dbReference type="RefSeq" id="NP_904358.2">
    <molecule id="Q15714-1"/>
    <property type="nucleotide sequence ID" value="NM_183422.4"/>
</dbReference>
<dbReference type="RefSeq" id="XP_047286671.1">
    <molecule id="Q15714-1"/>
    <property type="nucleotide sequence ID" value="XM_047430715.1"/>
</dbReference>
<dbReference type="RefSeq" id="XP_047286672.1">
    <molecule id="Q15714-1"/>
    <property type="nucleotide sequence ID" value="XM_047430716.1"/>
</dbReference>
<dbReference type="RefSeq" id="XP_054231078.1">
    <molecule id="Q15714-1"/>
    <property type="nucleotide sequence ID" value="XM_054375103.1"/>
</dbReference>
<dbReference type="RefSeq" id="XP_054231079.1">
    <molecule id="Q15714-1"/>
    <property type="nucleotide sequence ID" value="XM_054375104.1"/>
</dbReference>
<dbReference type="SMR" id="Q15714"/>
<dbReference type="BioGRID" id="114374">
    <property type="interactions" value="102"/>
</dbReference>
<dbReference type="FunCoup" id="Q15714">
    <property type="interactions" value="2232"/>
</dbReference>
<dbReference type="IntAct" id="Q15714">
    <property type="interactions" value="85"/>
</dbReference>
<dbReference type="MINT" id="Q15714"/>
<dbReference type="STRING" id="9606.ENSP00000397435"/>
<dbReference type="GlyCosmos" id="Q15714">
    <property type="glycosylation" value="3 sites, 1 glycan"/>
</dbReference>
<dbReference type="GlyGen" id="Q15714">
    <property type="glycosylation" value="5 sites, 1 O-linked glycan (3 sites)"/>
</dbReference>
<dbReference type="iPTMnet" id="Q15714"/>
<dbReference type="MetOSite" id="Q15714"/>
<dbReference type="PhosphoSitePlus" id="Q15714"/>
<dbReference type="BioMuta" id="TSC22D1"/>
<dbReference type="DMDM" id="334302874"/>
<dbReference type="jPOST" id="Q15714"/>
<dbReference type="MassIVE" id="Q15714"/>
<dbReference type="PaxDb" id="9606-ENSP00000397435"/>
<dbReference type="PeptideAtlas" id="Q15714"/>
<dbReference type="ProteomicsDB" id="3607"/>
<dbReference type="ProteomicsDB" id="60713">
    <molecule id="Q15714-1"/>
</dbReference>
<dbReference type="ProteomicsDB" id="60714">
    <molecule id="Q15714-2"/>
</dbReference>
<dbReference type="ProteomicsDB" id="60715">
    <molecule id="Q15714-3"/>
</dbReference>
<dbReference type="Pumba" id="Q15714"/>
<dbReference type="TopDownProteomics" id="Q15714-3">
    <molecule id="Q15714-3"/>
</dbReference>
<dbReference type="Antibodypedia" id="23553">
    <property type="antibodies" value="481 antibodies from 31 providers"/>
</dbReference>
<dbReference type="DNASU" id="8848"/>
<dbReference type="Ensembl" id="ENST00000261489.7">
    <molecule id="Q15714-2"/>
    <property type="protein sequence ID" value="ENSP00000261489.2"/>
    <property type="gene ID" value="ENSG00000102804.16"/>
</dbReference>
<dbReference type="Ensembl" id="ENST00000458659.3">
    <molecule id="Q15714-1"/>
    <property type="protein sequence ID" value="ENSP00000397435.2"/>
    <property type="gene ID" value="ENSG00000102804.16"/>
</dbReference>
<dbReference type="Ensembl" id="ENST00000611198.4">
    <molecule id="Q15714-5"/>
    <property type="protein sequence ID" value="ENSP00000481585.1"/>
    <property type="gene ID" value="ENSG00000102804.16"/>
</dbReference>
<dbReference type="Ensembl" id="ENST00000622051.1">
    <molecule id="Q15714-5"/>
    <property type="protein sequence ID" value="ENSP00000483407.1"/>
    <property type="gene ID" value="ENSG00000102804.16"/>
</dbReference>
<dbReference type="GeneID" id="8848"/>
<dbReference type="KEGG" id="hsa:8848"/>
<dbReference type="MANE-Select" id="ENST00000458659.3">
    <property type="protein sequence ID" value="ENSP00000397435.2"/>
    <property type="RefSeq nucleotide sequence ID" value="NM_183422.4"/>
    <property type="RefSeq protein sequence ID" value="NP_904358.2"/>
</dbReference>
<dbReference type="UCSC" id="uc001uzm.5">
    <molecule id="Q15714-1"/>
    <property type="organism name" value="human"/>
</dbReference>
<dbReference type="AGR" id="HGNC:16826"/>
<dbReference type="CTD" id="8848"/>
<dbReference type="DisGeNET" id="8848"/>
<dbReference type="GeneCards" id="TSC22D1"/>
<dbReference type="HGNC" id="HGNC:16826">
    <property type="gene designation" value="TSC22D1"/>
</dbReference>
<dbReference type="HPA" id="ENSG00000102804">
    <property type="expression patterns" value="Low tissue specificity"/>
</dbReference>
<dbReference type="MIM" id="607715">
    <property type="type" value="gene"/>
</dbReference>
<dbReference type="neXtProt" id="NX_Q15714"/>
<dbReference type="OpenTargets" id="ENSG00000102804"/>
<dbReference type="PharmGKB" id="PA134887618"/>
<dbReference type="VEuPathDB" id="HostDB:ENSG00000102804"/>
<dbReference type="eggNOG" id="KOG4797">
    <property type="taxonomic scope" value="Eukaryota"/>
</dbReference>
<dbReference type="GeneTree" id="ENSGT00940000159144"/>
<dbReference type="HOGENOM" id="CLU_148757_0_0_1"/>
<dbReference type="InParanoid" id="Q15714"/>
<dbReference type="OMA" id="EDSGHQQ"/>
<dbReference type="OrthoDB" id="8961796at2759"/>
<dbReference type="PAN-GO" id="Q15714">
    <property type="GO annotations" value="4 GO annotations based on evolutionary models"/>
</dbReference>
<dbReference type="PhylomeDB" id="Q15714"/>
<dbReference type="TreeFam" id="TF318837"/>
<dbReference type="PathwayCommons" id="Q15714"/>
<dbReference type="SignaLink" id="Q15714"/>
<dbReference type="SIGNOR" id="Q15714"/>
<dbReference type="BioGRID-ORCS" id="8848">
    <property type="hits" value="16 hits in 1179 CRISPR screens"/>
</dbReference>
<dbReference type="ChiTaRS" id="TSC22D1">
    <property type="organism name" value="human"/>
</dbReference>
<dbReference type="GeneWiki" id="TSC22D1"/>
<dbReference type="GenomeRNAi" id="8848"/>
<dbReference type="Pharos" id="Q15714">
    <property type="development level" value="Tbio"/>
</dbReference>
<dbReference type="PRO" id="PR:Q15714"/>
<dbReference type="Proteomes" id="UP000005640">
    <property type="component" value="Chromosome 13"/>
</dbReference>
<dbReference type="RNAct" id="Q15714">
    <property type="molecule type" value="protein"/>
</dbReference>
<dbReference type="Bgee" id="ENSG00000102804">
    <property type="expression patterns" value="Expressed in endothelial cell and 219 other cell types or tissues"/>
</dbReference>
<dbReference type="ExpressionAtlas" id="Q15714">
    <property type="expression patterns" value="baseline and differential"/>
</dbReference>
<dbReference type="GO" id="GO:0005737">
    <property type="term" value="C:cytoplasm"/>
    <property type="evidence" value="ECO:0000314"/>
    <property type="project" value="UniProtKB"/>
</dbReference>
<dbReference type="GO" id="GO:0005829">
    <property type="term" value="C:cytosol"/>
    <property type="evidence" value="ECO:0000318"/>
    <property type="project" value="GO_Central"/>
</dbReference>
<dbReference type="GO" id="GO:0005739">
    <property type="term" value="C:mitochondrion"/>
    <property type="evidence" value="ECO:0000314"/>
    <property type="project" value="UniProtKB"/>
</dbReference>
<dbReference type="GO" id="GO:0005634">
    <property type="term" value="C:nucleus"/>
    <property type="evidence" value="ECO:0000314"/>
    <property type="project" value="UniProtKB"/>
</dbReference>
<dbReference type="GO" id="GO:0005886">
    <property type="term" value="C:plasma membrane"/>
    <property type="evidence" value="ECO:0000314"/>
    <property type="project" value="UniProtKB"/>
</dbReference>
<dbReference type="GO" id="GO:0042802">
    <property type="term" value="F:identical protein binding"/>
    <property type="evidence" value="ECO:0000314"/>
    <property type="project" value="UniProtKB"/>
</dbReference>
<dbReference type="GO" id="GO:0003713">
    <property type="term" value="F:transcription coactivator activity"/>
    <property type="evidence" value="ECO:0000315"/>
    <property type="project" value="UniProtKB"/>
</dbReference>
<dbReference type="GO" id="GO:0043066">
    <property type="term" value="P:negative regulation of apoptotic process"/>
    <property type="evidence" value="ECO:0000318"/>
    <property type="project" value="GO_Central"/>
</dbReference>
<dbReference type="GO" id="GO:1902034">
    <property type="term" value="P:negative regulation of hematopoietic stem cell proliferation"/>
    <property type="evidence" value="ECO:0000250"/>
    <property type="project" value="UniProtKB"/>
</dbReference>
<dbReference type="GO" id="GO:0043069">
    <property type="term" value="P:negative regulation of programmed cell death"/>
    <property type="evidence" value="ECO:0000250"/>
    <property type="project" value="UniProtKB"/>
</dbReference>
<dbReference type="GO" id="GO:0043065">
    <property type="term" value="P:positive regulation of apoptotic process"/>
    <property type="evidence" value="ECO:0000315"/>
    <property type="project" value="UniProtKB"/>
</dbReference>
<dbReference type="GO" id="GO:0008284">
    <property type="term" value="P:positive regulation of cell population proliferation"/>
    <property type="evidence" value="ECO:0000318"/>
    <property type="project" value="GO_Central"/>
</dbReference>
<dbReference type="GO" id="GO:0043068">
    <property type="term" value="P:positive regulation of programmed cell death"/>
    <property type="evidence" value="ECO:0000250"/>
    <property type="project" value="UniProtKB"/>
</dbReference>
<dbReference type="GO" id="GO:0030511">
    <property type="term" value="P:positive regulation of transforming growth factor beta receptor signaling pathway"/>
    <property type="evidence" value="ECO:0000315"/>
    <property type="project" value="UniProtKB"/>
</dbReference>
<dbReference type="GO" id="GO:0006357">
    <property type="term" value="P:regulation of transcription by RNA polymerase II"/>
    <property type="evidence" value="ECO:0007669"/>
    <property type="project" value="InterPro"/>
</dbReference>
<dbReference type="GO" id="GO:0006366">
    <property type="term" value="P:transcription by RNA polymerase II"/>
    <property type="evidence" value="ECO:0000304"/>
    <property type="project" value="ProtInc"/>
</dbReference>
<dbReference type="CDD" id="cd21938">
    <property type="entry name" value="ZIP_TSC22D1"/>
    <property type="match status" value="1"/>
</dbReference>
<dbReference type="FunFam" id="1.20.5.490:FF:000002">
    <property type="entry name" value="TSC22 domain family, member 1"/>
    <property type="match status" value="1"/>
</dbReference>
<dbReference type="Gene3D" id="1.20.5.490">
    <property type="entry name" value="Single helix bin"/>
    <property type="match status" value="1"/>
</dbReference>
<dbReference type="InterPro" id="IPR000580">
    <property type="entry name" value="TSC22/Bun"/>
</dbReference>
<dbReference type="InterPro" id="IPR047862">
    <property type="entry name" value="TSC22/BUN_CS"/>
</dbReference>
<dbReference type="PANTHER" id="PTHR46745">
    <property type="entry name" value="TSC22 DOMAIN FAMILY PROTEIN 1"/>
    <property type="match status" value="1"/>
</dbReference>
<dbReference type="PANTHER" id="PTHR46745:SF1">
    <property type="entry name" value="TSC22 DOMAIN FAMILY PROTEIN 1"/>
    <property type="match status" value="1"/>
</dbReference>
<dbReference type="Pfam" id="PF01166">
    <property type="entry name" value="TSC22"/>
    <property type="match status" value="1"/>
</dbReference>
<dbReference type="SUPFAM" id="SSF58026">
    <property type="entry name" value="Delta-sleep-inducing peptide immunoreactive peptide"/>
    <property type="match status" value="1"/>
</dbReference>
<dbReference type="PROSITE" id="PS01289">
    <property type="entry name" value="TSC22"/>
    <property type="match status" value="1"/>
</dbReference>
<feature type="chain" id="PRO_0000219365" description="TSC22 domain family protein 1">
    <location>
        <begin position="1"/>
        <end position="1073"/>
    </location>
</feature>
<feature type="region of interest" description="Required for interaction with TGFBR1 and promotion of TGF-beta signaling" evidence="9">
    <location>
        <begin position="1"/>
        <end position="98"/>
    </location>
</feature>
<feature type="region of interest" description="Disordered" evidence="3">
    <location>
        <begin position="22"/>
        <end position="110"/>
    </location>
</feature>
<feature type="region of interest" description="Disordered" evidence="3">
    <location>
        <begin position="125"/>
        <end position="205"/>
    </location>
</feature>
<feature type="region of interest" description="Disordered" evidence="3">
    <location>
        <begin position="220"/>
        <end position="288"/>
    </location>
</feature>
<feature type="region of interest" description="Disordered" evidence="3">
    <location>
        <begin position="458"/>
        <end position="486"/>
    </location>
</feature>
<feature type="region of interest" description="Disordered" evidence="3">
    <location>
        <begin position="607"/>
        <end position="628"/>
    </location>
</feature>
<feature type="region of interest" description="Disordered" evidence="3">
    <location>
        <begin position="742"/>
        <end position="766"/>
    </location>
</feature>
<feature type="region of interest" description="Leucine-zipper">
    <location>
        <begin position="1006"/>
        <end position="1027"/>
    </location>
</feature>
<feature type="region of interest" description="Disordered" evidence="3">
    <location>
        <begin position="1037"/>
        <end position="1073"/>
    </location>
</feature>
<feature type="compositionally biased region" description="Low complexity" evidence="3">
    <location>
        <begin position="36"/>
        <end position="45"/>
    </location>
</feature>
<feature type="compositionally biased region" description="Pro residues" evidence="3">
    <location>
        <begin position="58"/>
        <end position="70"/>
    </location>
</feature>
<feature type="compositionally biased region" description="Low complexity" evidence="3">
    <location>
        <begin position="84"/>
        <end position="100"/>
    </location>
</feature>
<feature type="compositionally biased region" description="Acidic residues" evidence="3">
    <location>
        <begin position="133"/>
        <end position="142"/>
    </location>
</feature>
<feature type="compositionally biased region" description="Basic residues" evidence="3">
    <location>
        <begin position="220"/>
        <end position="240"/>
    </location>
</feature>
<feature type="compositionally biased region" description="Polar residues" evidence="3">
    <location>
        <begin position="257"/>
        <end position="271"/>
    </location>
</feature>
<feature type="compositionally biased region" description="Low complexity" evidence="3">
    <location>
        <begin position="272"/>
        <end position="288"/>
    </location>
</feature>
<feature type="compositionally biased region" description="Low complexity" evidence="3">
    <location>
        <begin position="465"/>
        <end position="483"/>
    </location>
</feature>
<feature type="compositionally biased region" description="Pro residues" evidence="3">
    <location>
        <begin position="614"/>
        <end position="625"/>
    </location>
</feature>
<feature type="compositionally biased region" description="Polar residues" evidence="3">
    <location>
        <begin position="742"/>
        <end position="764"/>
    </location>
</feature>
<feature type="compositionally biased region" description="Low complexity" evidence="3">
    <location>
        <begin position="1044"/>
        <end position="1073"/>
    </location>
</feature>
<feature type="modified residue" description="Phosphoserine" evidence="25">
    <location>
        <position position="263"/>
    </location>
</feature>
<feature type="splice variant" id="VSP_061917" description="In isoform 5.">
    <location>
        <begin position="1"/>
        <end position="987"/>
    </location>
</feature>
<feature type="splice variant" id="VSP_035325" description="In isoform 2." evidence="14 15 18 19 20 21 22">
    <location>
        <begin position="1"/>
        <end position="921"/>
    </location>
</feature>
<feature type="splice variant" id="VSP_035324" description="In isoform 3." evidence="16">
    <location>
        <begin position="1"/>
        <end position="488"/>
    </location>
</feature>
<feature type="splice variant" id="VSP_044939" description="In isoform 4." evidence="14">
    <original>QQKQGLQPVPLQAT</original>
    <variation>LTMKVVLLIVYLCM</variation>
    <location>
        <begin position="557"/>
        <end position="570"/>
    </location>
</feature>
<feature type="splice variant" id="VSP_044940" description="In isoform 4." evidence="14">
    <location>
        <begin position="571"/>
        <end position="1073"/>
    </location>
</feature>
<feature type="splice variant" id="VSP_035326" description="In isoform 2." evidence="14 15 18 19 20 21 22">
    <original>VGLPQTISGDSGGMSAVSDGSSSSLAASASLFPLKVLPLTTPLVDGEDE</original>
    <variation>MKSQWCRPVAMDLGVYQLRHFSISFLSSLLGTENASVRLDN</variation>
    <location>
        <begin position="922"/>
        <end position="970"/>
    </location>
</feature>
<feature type="sequence variant" id="VAR_057311" description="In dbSNP:rs9525983.">
    <original>P</original>
    <variation>S</variation>
    <location>
        <position position="652"/>
    </location>
</feature>
<feature type="sequence conflict" description="In Ref. 6; BAC02703." evidence="23" ref="6">
    <original>M</original>
    <variation>I</variation>
    <location>
        <position position="332"/>
    </location>
</feature>
<feature type="sequence conflict" description="In Ref. 12; CAH10539." evidence="23" ref="12">
    <original>P</original>
    <variation>L</variation>
    <location>
        <position position="581"/>
    </location>
</feature>
<feature type="sequence conflict" description="In Ref. 12; CAH10539." evidence="23" ref="12">
    <original>P</original>
    <variation>S</variation>
    <location>
        <position position="661"/>
    </location>
</feature>
<feature type="sequence conflict" description="In Ref. 4; BAB46917." evidence="23" ref="4">
    <original>V</original>
    <variation>A</variation>
    <location sequence="Q15714-2">
        <position position="15"/>
    </location>
</feature>
<keyword id="KW-0025">Alternative splicing</keyword>
<keyword id="KW-1003">Cell membrane</keyword>
<keyword id="KW-0963">Cytoplasm</keyword>
<keyword id="KW-0472">Membrane</keyword>
<keyword id="KW-0496">Mitochondrion</keyword>
<keyword id="KW-0539">Nucleus</keyword>
<keyword id="KW-0597">Phosphoprotein</keyword>
<keyword id="KW-1267">Proteomics identification</keyword>
<keyword id="KW-1185">Reference proteome</keyword>
<keyword id="KW-0678">Repressor</keyword>
<keyword id="KW-0804">Transcription</keyword>
<keyword id="KW-0805">Transcription regulation</keyword>
<reference key="1">
    <citation type="journal article" date="1996" name="Biochem. Biophys. Res. Commun.">
        <title>Cloning of the human homologue of the TGF beta-stimulated clone 22 gene.</title>
        <authorList>
            <person name="Jay P."/>
            <person name="Wei J.W."/>
            <person name="Marsollier C."/>
            <person name="Taviaux S."/>
            <person name="Berge-Lefranc J.-L."/>
            <person name="Berta P."/>
        </authorList>
    </citation>
    <scope>NUCLEOTIDE SEQUENCE [MRNA] (ISOFORM 2)</scope>
    <scope>TISSUE SPECIFICITY</scope>
    <scope>DEVELOPMENTAL STAGE</scope>
</reference>
<reference key="2">
    <citation type="journal article" date="1996" name="Eur. J. Biochem.">
        <title>Molecular cloning and characterization of a transcription factor for the C-type natriuretic peptide gene promoter.</title>
        <authorList>
            <person name="Ohta S."/>
            <person name="Shimekake Y."/>
            <person name="Nagata K."/>
        </authorList>
    </citation>
    <scope>NUCLEOTIDE SEQUENCE [MRNA] (ISOFORM 2)</scope>
    <scope>FUNCTION</scope>
    <scope>INDUCTION BY TGFB1 AND CYTOKINES</scope>
    <source>
        <tissue>Kidney</tissue>
    </source>
</reference>
<reference key="3">
    <citation type="journal article" date="1996" name="Cyt. Genet.">
        <title>The characteristics of different types of mRNA expressed in the human brain.</title>
        <authorList>
            <person name="Dmitrenko V.V."/>
            <person name="Garifulin O.M."/>
            <person name="Shostak E.A."/>
            <person name="Smikodub A.I."/>
            <person name="Kavsan V.M."/>
        </authorList>
    </citation>
    <scope>NUCLEOTIDE SEQUENCE [MRNA] (ISOFORM 2)</scope>
    <source>
        <tissue>Brain</tissue>
    </source>
</reference>
<reference key="4">
    <citation type="submission" date="1996-08" db="EMBL/GenBank/DDBJ databases">
        <title>Hucep-2, a gene which is expressed in the human brain, is a homologue of rodent and chicken TSC-22.</title>
        <authorList>
            <person name="Yazaki M."/>
            <person name="Takayama K."/>
            <person name="Matsumoto K."/>
            <person name="Yoshimoto M."/>
        </authorList>
    </citation>
    <scope>NUCLEOTIDE SEQUENCE [MRNA] (ISOFORM 2)</scope>
    <source>
        <tissue>Brain cortex</tissue>
    </source>
</reference>
<reference key="5">
    <citation type="submission" date="2000-04" db="EMBL/GenBank/DDBJ databases">
        <title>Cloning and characterization of human TSC-22 genomic DNA.</title>
        <authorList>
            <person name="Kawamata H."/>
            <person name="Uchida D."/>
            <person name="Omotehara F."/>
            <person name="Hino S."/>
            <person name="Nakashiro K."/>
            <person name="Miwa Y."/>
            <person name="Begum N."/>
            <person name="Hoque M.O."/>
            <person name="Yoshida H."/>
            <person name="Sato M."/>
        </authorList>
    </citation>
    <scope>NUCLEOTIDE SEQUENCE [GENOMIC DNA]</scope>
</reference>
<reference key="6">
    <citation type="journal article" date="2002" name="DNA Res.">
        <title>Characterization of size-fractionated cDNA libraries generated by the in vitro recombination-assisted method.</title>
        <authorList>
            <person name="Ohara O."/>
            <person name="Nagase T."/>
            <person name="Mitsui G."/>
            <person name="Kohga H."/>
            <person name="Kikuno R."/>
            <person name="Hiraoka S."/>
            <person name="Takahashi Y."/>
            <person name="Kitajima S."/>
            <person name="Saga Y."/>
            <person name="Koseki H."/>
        </authorList>
    </citation>
    <scope>NUCLEOTIDE SEQUENCE [LARGE SCALE MRNA] (ISOFORM 1)</scope>
    <source>
        <tissue>Brain</tissue>
    </source>
</reference>
<reference key="7">
    <citation type="journal article" date="2004" name="Nat. Genet.">
        <title>Complete sequencing and characterization of 21,243 full-length human cDNAs.</title>
        <authorList>
            <person name="Ota T."/>
            <person name="Suzuki Y."/>
            <person name="Nishikawa T."/>
            <person name="Otsuki T."/>
            <person name="Sugiyama T."/>
            <person name="Irie R."/>
            <person name="Wakamatsu A."/>
            <person name="Hayashi K."/>
            <person name="Sato H."/>
            <person name="Nagai K."/>
            <person name="Kimura K."/>
            <person name="Makita H."/>
            <person name="Sekine M."/>
            <person name="Obayashi M."/>
            <person name="Nishi T."/>
            <person name="Shibahara T."/>
            <person name="Tanaka T."/>
            <person name="Ishii S."/>
            <person name="Yamamoto J."/>
            <person name="Saito K."/>
            <person name="Kawai Y."/>
            <person name="Isono Y."/>
            <person name="Nakamura Y."/>
            <person name="Nagahari K."/>
            <person name="Murakami K."/>
            <person name="Yasuda T."/>
            <person name="Iwayanagi T."/>
            <person name="Wagatsuma M."/>
            <person name="Shiratori A."/>
            <person name="Sudo H."/>
            <person name="Hosoiri T."/>
            <person name="Kaku Y."/>
            <person name="Kodaira H."/>
            <person name="Kondo H."/>
            <person name="Sugawara M."/>
            <person name="Takahashi M."/>
            <person name="Kanda K."/>
            <person name="Yokoi T."/>
            <person name="Furuya T."/>
            <person name="Kikkawa E."/>
            <person name="Omura Y."/>
            <person name="Abe K."/>
            <person name="Kamihara K."/>
            <person name="Katsuta N."/>
            <person name="Sato K."/>
            <person name="Tanikawa M."/>
            <person name="Yamazaki M."/>
            <person name="Ninomiya K."/>
            <person name="Ishibashi T."/>
            <person name="Yamashita H."/>
            <person name="Murakawa K."/>
            <person name="Fujimori K."/>
            <person name="Tanai H."/>
            <person name="Kimata M."/>
            <person name="Watanabe M."/>
            <person name="Hiraoka S."/>
            <person name="Chiba Y."/>
            <person name="Ishida S."/>
            <person name="Ono Y."/>
            <person name="Takiguchi S."/>
            <person name="Watanabe S."/>
            <person name="Yosida M."/>
            <person name="Hotuta T."/>
            <person name="Kusano J."/>
            <person name="Kanehori K."/>
            <person name="Takahashi-Fujii A."/>
            <person name="Hara H."/>
            <person name="Tanase T.-O."/>
            <person name="Nomura Y."/>
            <person name="Togiya S."/>
            <person name="Komai F."/>
            <person name="Hara R."/>
            <person name="Takeuchi K."/>
            <person name="Arita M."/>
            <person name="Imose N."/>
            <person name="Musashino K."/>
            <person name="Yuuki H."/>
            <person name="Oshima A."/>
            <person name="Sasaki N."/>
            <person name="Aotsuka S."/>
            <person name="Yoshikawa Y."/>
            <person name="Matsunawa H."/>
            <person name="Ichihara T."/>
            <person name="Shiohata N."/>
            <person name="Sano S."/>
            <person name="Moriya S."/>
            <person name="Momiyama H."/>
            <person name="Satoh N."/>
            <person name="Takami S."/>
            <person name="Terashima Y."/>
            <person name="Suzuki O."/>
            <person name="Nakagawa S."/>
            <person name="Senoh A."/>
            <person name="Mizoguchi H."/>
            <person name="Goto Y."/>
            <person name="Shimizu F."/>
            <person name="Wakebe H."/>
            <person name="Hishigaki H."/>
            <person name="Watanabe T."/>
            <person name="Sugiyama A."/>
            <person name="Takemoto M."/>
            <person name="Kawakami B."/>
            <person name="Yamazaki M."/>
            <person name="Watanabe K."/>
            <person name="Kumagai A."/>
            <person name="Itakura S."/>
            <person name="Fukuzumi Y."/>
            <person name="Fujimori Y."/>
            <person name="Komiyama M."/>
            <person name="Tashiro H."/>
            <person name="Tanigami A."/>
            <person name="Fujiwara T."/>
            <person name="Ono T."/>
            <person name="Yamada K."/>
            <person name="Fujii Y."/>
            <person name="Ozaki K."/>
            <person name="Hirao M."/>
            <person name="Ohmori Y."/>
            <person name="Kawabata A."/>
            <person name="Hikiji T."/>
            <person name="Kobatake N."/>
            <person name="Inagaki H."/>
            <person name="Ikema Y."/>
            <person name="Okamoto S."/>
            <person name="Okitani R."/>
            <person name="Kawakami T."/>
            <person name="Noguchi S."/>
            <person name="Itoh T."/>
            <person name="Shigeta K."/>
            <person name="Senba T."/>
            <person name="Matsumura K."/>
            <person name="Nakajima Y."/>
            <person name="Mizuno T."/>
            <person name="Morinaga M."/>
            <person name="Sasaki M."/>
            <person name="Togashi T."/>
            <person name="Oyama M."/>
            <person name="Hata H."/>
            <person name="Watanabe M."/>
            <person name="Komatsu T."/>
            <person name="Mizushima-Sugano J."/>
            <person name="Satoh T."/>
            <person name="Shirai Y."/>
            <person name="Takahashi Y."/>
            <person name="Nakagawa K."/>
            <person name="Okumura K."/>
            <person name="Nagase T."/>
            <person name="Nomura N."/>
            <person name="Kikuchi H."/>
            <person name="Masuho Y."/>
            <person name="Yamashita R."/>
            <person name="Nakai K."/>
            <person name="Yada T."/>
            <person name="Nakamura Y."/>
            <person name="Ohara O."/>
            <person name="Isogai T."/>
            <person name="Sugano S."/>
        </authorList>
    </citation>
    <scope>NUCLEOTIDE SEQUENCE [LARGE SCALE MRNA] (ISOFORMS 2 AND 4)</scope>
    <source>
        <tissue>Brain cortex</tissue>
        <tissue>Lung</tissue>
    </source>
</reference>
<reference key="8">
    <citation type="submission" date="2004-06" db="EMBL/GenBank/DDBJ databases">
        <title>Cloning of human full open reading frames in Gateway(TM) system entry vector (pDONR201).</title>
        <authorList>
            <person name="Ebert L."/>
            <person name="Schick M."/>
            <person name="Neubert P."/>
            <person name="Schatten R."/>
            <person name="Henze S."/>
            <person name="Korn B."/>
        </authorList>
    </citation>
    <scope>NUCLEOTIDE SEQUENCE [LARGE SCALE MRNA] (ISOFORM 2)</scope>
</reference>
<reference key="9">
    <citation type="journal article" date="2007" name="BMC Genomics">
        <title>The full-ORF clone resource of the German cDNA consortium.</title>
        <authorList>
            <person name="Bechtel S."/>
            <person name="Rosenfelder H."/>
            <person name="Duda A."/>
            <person name="Schmidt C.P."/>
            <person name="Ernst U."/>
            <person name="Wellenreuther R."/>
            <person name="Mehrle A."/>
            <person name="Schuster C."/>
            <person name="Bahr A."/>
            <person name="Bloecker H."/>
            <person name="Heubner D."/>
            <person name="Hoerlein A."/>
            <person name="Michel G."/>
            <person name="Wedler H."/>
            <person name="Koehrer K."/>
            <person name="Ottenwaelder B."/>
            <person name="Poustka A."/>
            <person name="Wiemann S."/>
            <person name="Schupp I."/>
        </authorList>
    </citation>
    <scope>NUCLEOTIDE SEQUENCE [LARGE SCALE MRNA] (ISOFORM 3)</scope>
    <source>
        <tissue>Fetal brain</tissue>
    </source>
</reference>
<reference key="10">
    <citation type="journal article" date="2004" name="Nature">
        <title>The DNA sequence and analysis of human chromosome 13.</title>
        <authorList>
            <person name="Dunham A."/>
            <person name="Matthews L.H."/>
            <person name="Burton J."/>
            <person name="Ashurst J.L."/>
            <person name="Howe K.L."/>
            <person name="Ashcroft K.J."/>
            <person name="Beare D.M."/>
            <person name="Burford D.C."/>
            <person name="Hunt S.E."/>
            <person name="Griffiths-Jones S."/>
            <person name="Jones M.C."/>
            <person name="Keenan S.J."/>
            <person name="Oliver K."/>
            <person name="Scott C.E."/>
            <person name="Ainscough R."/>
            <person name="Almeida J.P."/>
            <person name="Ambrose K.D."/>
            <person name="Andrews D.T."/>
            <person name="Ashwell R.I.S."/>
            <person name="Babbage A.K."/>
            <person name="Bagguley C.L."/>
            <person name="Bailey J."/>
            <person name="Bannerjee R."/>
            <person name="Barlow K.F."/>
            <person name="Bates K."/>
            <person name="Beasley H."/>
            <person name="Bird C.P."/>
            <person name="Bray-Allen S."/>
            <person name="Brown A.J."/>
            <person name="Brown J.Y."/>
            <person name="Burrill W."/>
            <person name="Carder C."/>
            <person name="Carter N.P."/>
            <person name="Chapman J.C."/>
            <person name="Clamp M.E."/>
            <person name="Clark S.Y."/>
            <person name="Clarke G."/>
            <person name="Clee C.M."/>
            <person name="Clegg S.C."/>
            <person name="Cobley V."/>
            <person name="Collins J.E."/>
            <person name="Corby N."/>
            <person name="Coville G.J."/>
            <person name="Deloukas P."/>
            <person name="Dhami P."/>
            <person name="Dunham I."/>
            <person name="Dunn M."/>
            <person name="Earthrowl M.E."/>
            <person name="Ellington A.G."/>
            <person name="Faulkner L."/>
            <person name="Frankish A.G."/>
            <person name="Frankland J."/>
            <person name="French L."/>
            <person name="Garner P."/>
            <person name="Garnett J."/>
            <person name="Gilbert J.G.R."/>
            <person name="Gilson C.J."/>
            <person name="Ghori J."/>
            <person name="Grafham D.V."/>
            <person name="Gribble S.M."/>
            <person name="Griffiths C."/>
            <person name="Hall R.E."/>
            <person name="Hammond S."/>
            <person name="Harley J.L."/>
            <person name="Hart E.A."/>
            <person name="Heath P.D."/>
            <person name="Howden P.J."/>
            <person name="Huckle E.J."/>
            <person name="Hunt P.J."/>
            <person name="Hunt A.R."/>
            <person name="Johnson C."/>
            <person name="Johnson D."/>
            <person name="Kay M."/>
            <person name="Kimberley A.M."/>
            <person name="King A."/>
            <person name="Laird G.K."/>
            <person name="Langford C.J."/>
            <person name="Lawlor S."/>
            <person name="Leongamornlert D.A."/>
            <person name="Lloyd D.M."/>
            <person name="Lloyd C."/>
            <person name="Loveland J.E."/>
            <person name="Lovell J."/>
            <person name="Martin S."/>
            <person name="Mashreghi-Mohammadi M."/>
            <person name="McLaren S.J."/>
            <person name="McMurray A."/>
            <person name="Milne S."/>
            <person name="Moore M.J.F."/>
            <person name="Nickerson T."/>
            <person name="Palmer S.A."/>
            <person name="Pearce A.V."/>
            <person name="Peck A.I."/>
            <person name="Pelan S."/>
            <person name="Phillimore B."/>
            <person name="Porter K.M."/>
            <person name="Rice C.M."/>
            <person name="Searle S."/>
            <person name="Sehra H.K."/>
            <person name="Shownkeen R."/>
            <person name="Skuce C.D."/>
            <person name="Smith M."/>
            <person name="Steward C.A."/>
            <person name="Sycamore N."/>
            <person name="Tester J."/>
            <person name="Thomas D.W."/>
            <person name="Tracey A."/>
            <person name="Tromans A."/>
            <person name="Tubby B."/>
            <person name="Wall M."/>
            <person name="Wallis J.M."/>
            <person name="West A.P."/>
            <person name="Whitehead S.L."/>
            <person name="Willey D.L."/>
            <person name="Wilming L."/>
            <person name="Wray P.W."/>
            <person name="Wright M.W."/>
            <person name="Young L."/>
            <person name="Coulson A."/>
            <person name="Durbin R.M."/>
            <person name="Hubbard T."/>
            <person name="Sulston J.E."/>
            <person name="Beck S."/>
            <person name="Bentley D.R."/>
            <person name="Rogers J."/>
            <person name="Ross M.T."/>
        </authorList>
    </citation>
    <scope>NUCLEOTIDE SEQUENCE [LARGE SCALE GENOMIC DNA]</scope>
</reference>
<reference key="11">
    <citation type="submission" date="2005-07" db="EMBL/GenBank/DDBJ databases">
        <authorList>
            <person name="Mural R.J."/>
            <person name="Istrail S."/>
            <person name="Sutton G.G."/>
            <person name="Florea L."/>
            <person name="Halpern A.L."/>
            <person name="Mobarry C.M."/>
            <person name="Lippert R."/>
            <person name="Walenz B."/>
            <person name="Shatkay H."/>
            <person name="Dew I."/>
            <person name="Miller J.R."/>
            <person name="Flanigan M.J."/>
            <person name="Edwards N.J."/>
            <person name="Bolanos R."/>
            <person name="Fasulo D."/>
            <person name="Halldorsson B.V."/>
            <person name="Hannenhalli S."/>
            <person name="Turner R."/>
            <person name="Yooseph S."/>
            <person name="Lu F."/>
            <person name="Nusskern D.R."/>
            <person name="Shue B.C."/>
            <person name="Zheng X.H."/>
            <person name="Zhong F."/>
            <person name="Delcher A.L."/>
            <person name="Huson D.H."/>
            <person name="Kravitz S.A."/>
            <person name="Mouchard L."/>
            <person name="Reinert K."/>
            <person name="Remington K.A."/>
            <person name="Clark A.G."/>
            <person name="Waterman M.S."/>
            <person name="Eichler E.E."/>
            <person name="Adams M.D."/>
            <person name="Hunkapiller M.W."/>
            <person name="Myers E.W."/>
            <person name="Venter J.C."/>
        </authorList>
    </citation>
    <scope>NUCLEOTIDE SEQUENCE [LARGE SCALE GENOMIC DNA]</scope>
</reference>
<reference key="12">
    <citation type="journal article" date="2004" name="Genome Res.">
        <title>The status, quality, and expansion of the NIH full-length cDNA project: the Mammalian Gene Collection (MGC).</title>
        <authorList>
            <consortium name="The MGC Project Team"/>
        </authorList>
    </citation>
    <scope>NUCLEOTIDE SEQUENCE [LARGE SCALE MRNA] (ISOFORMS 1 AND 2)</scope>
    <source>
        <tissue>Brain</tissue>
        <tissue>Colon</tissue>
        <tissue>Lung</tissue>
        <tissue>Ovary</tissue>
        <tissue>Testis</tissue>
    </source>
</reference>
<reference key="13">
    <citation type="journal article" date="1999" name="J. Biol. Chem.">
        <title>Transforming growth factor-beta-stimulated clone-22 is a member of a family of leucine zipper proteins that can homo- and heterodimerize and has transcriptional repressor activity.</title>
        <authorList>
            <person name="Kester H.A."/>
            <person name="Blanchetot C."/>
            <person name="den Hertog J."/>
            <person name="van der Saag P.T."/>
            <person name="van der Burg B."/>
        </authorList>
    </citation>
    <scope>FUNCTION</scope>
    <scope>SUBUNIT</scope>
    <scope>INTERACTION WITH TSC22D4 (ISOFORM 2)</scope>
</reference>
<reference key="14">
    <citation type="journal article" date="2003" name="J. Biol. Chem.">
        <title>Peroxisome proliferator-activated receptor gamma and transforming growth factor-beta pathways inhibit intestinal epithelial cell growth by regulating levels of TSC-22.</title>
        <authorList>
            <person name="Gupta R.A."/>
            <person name="Sarraf P."/>
            <person name="Brockman J.A."/>
            <person name="Shappell S.B."/>
            <person name="Raftery L.A."/>
            <person name="Willson T.M."/>
            <person name="DuBois R.N."/>
        </authorList>
    </citation>
    <scope>TISSUE SPECIFICITY</scope>
</reference>
<reference key="15">
    <citation type="journal article" date="2005" name="Mol. Cell. Biochem.">
        <title>Tsc-22 enhances TGF-beta signaling by associating with Smad4 and induces erythroid cell differentiation.</title>
        <authorList>
            <person name="Choi S.J."/>
            <person name="Moon J.H."/>
            <person name="Ahn Y.W."/>
            <person name="Ahn J.H."/>
            <person name="Kim D.U."/>
            <person name="Han T.H."/>
        </authorList>
    </citation>
    <scope>FUNCTION</scope>
    <scope>INTERACTION WITH SMAD4</scope>
</reference>
<reference key="16">
    <citation type="journal article" date="2008" name="FEBS Lett.">
        <title>Interaction between fortilin and transforming growth factor-beta stimulated clone-22 (TSC-22) prevents apoptosis via the destabilization of TSC-22.</title>
        <authorList>
            <person name="Lee J.H."/>
            <person name="Rho S.B."/>
            <person name="Park S.Y."/>
            <person name="Chun T."/>
        </authorList>
    </citation>
    <scope>FUNCTION</scope>
    <scope>INTERACTION WITH TPT1</scope>
</reference>
<reference key="17">
    <citation type="journal article" date="2009" name="Sci. Signal.">
        <title>Quantitative phosphoproteomic analysis of T cell receptor signaling reveals system-wide modulation of protein-protein interactions.</title>
        <authorList>
            <person name="Mayya V."/>
            <person name="Lundgren D.H."/>
            <person name="Hwang S.-I."/>
            <person name="Rezaul K."/>
            <person name="Wu L."/>
            <person name="Eng J.K."/>
            <person name="Rodionov V."/>
            <person name="Han D.K."/>
        </authorList>
    </citation>
    <scope>PHOSPHORYLATION [LARGE SCALE ANALYSIS] AT SER-263</scope>
    <scope>IDENTIFICATION BY MASS SPECTROMETRY [LARGE SCALE ANALYSIS]</scope>
    <source>
        <tissue>Leukemic T-cell</tissue>
    </source>
</reference>
<reference key="18">
    <citation type="journal article" date="2011" name="BMC Syst. Biol.">
        <title>Initial characterization of the human central proteome.</title>
        <authorList>
            <person name="Burkard T.R."/>
            <person name="Planyavsky M."/>
            <person name="Kaupe I."/>
            <person name="Breitwieser F.P."/>
            <person name="Buerckstuemmer T."/>
            <person name="Bennett K.L."/>
            <person name="Superti-Furga G."/>
            <person name="Colinge J."/>
        </authorList>
    </citation>
    <scope>IDENTIFICATION BY MASS SPECTROMETRY [LARGE SCALE ANALYSIS]</scope>
</reference>
<reference key="19">
    <citation type="journal article" date="2011" name="EMBO J.">
        <title>Antagonistic TSC22D1 variants control BRAF(E600)-induced senescence.</title>
        <authorList>
            <person name="Hoemig-Hoelzel C."/>
            <person name="van Doorn R."/>
            <person name="Vogel C."/>
            <person name="Germann M."/>
            <person name="Cecchini M.G."/>
            <person name="Verdegaal E."/>
            <person name="Peeper D.S."/>
        </authorList>
    </citation>
    <scope>INTERACTION WITH TSC22D4</scope>
</reference>
<reference key="20">
    <citation type="journal article" date="2011" name="Mol. Cell. Biol.">
        <title>TSC-22 promotes transforming growth factor beta-mediated cardiac myofibroblast differentiation by antagonizing Smad7 activity.</title>
        <authorList>
            <person name="Yan X."/>
            <person name="Zhang J."/>
            <person name="Pan L."/>
            <person name="Wang P."/>
            <person name="Xue H."/>
            <person name="Zhang L."/>
            <person name="Gao X."/>
            <person name="Zhao X."/>
            <person name="Ning Y."/>
            <person name="Chen Y.G."/>
        </authorList>
    </citation>
    <scope>FUNCTION</scope>
    <scope>IDENTIFICATION IN COMPLEX WITH TGFBR1 AND TGFBR2</scope>
    <scope>INTERACTION WITH ACVRL1; ACVR1; BMPR1A; ACVR1B; BMPR1B; ACVR2A; BMPR2; SMAD6 AND SMAD7</scope>
    <scope>SUBCELLULAR LOCATION</scope>
</reference>
<reference key="21">
    <citation type="journal article" date="2016" name="J. Cell. Biochem.">
        <title>TSC-22 Promotes Interleukin-2-Deprivation Induced Apoptosis in T-Lymphocytes.</title>
        <authorList>
            <person name="Pepin A."/>
            <person name="Espinasse M.A."/>
            <person name="Latre de Late P."/>
            <person name="Szely N."/>
            <person name="Pallardy M."/>
            <person name="Biola-Vidamment A."/>
        </authorList>
    </citation>
    <scope>FUNCTION</scope>
    <scope>TISSUE SPECIFICITY</scope>
    <scope>DEVELOPMENTAL STAGE</scope>
</reference>
<reference key="22">
    <citation type="journal article" date="2021" name="Int. J. Mol. Sci.">
        <title>Identification of Binding Proteins for TSC22D1 Family Proteins Using Mass Spectrometry.</title>
        <authorList>
            <person name="Kamimura R."/>
            <person name="Uchida D."/>
            <person name="Kanno S.I."/>
            <person name="Shiraishi R."/>
            <person name="Hyodo T."/>
            <person name="Sawatani Y."/>
            <person name="Shimura M."/>
            <person name="Hasegawa T."/>
            <person name="Tsubura-Okubo M."/>
            <person name="Yaguchi E."/>
            <person name="Komiyama Y."/>
            <person name="Fukumoto C."/>
            <person name="Izumi S."/>
            <person name="Fujita A."/>
            <person name="Wakui T."/>
            <person name="Kawamata H."/>
        </authorList>
    </citation>
    <scope>INTERACTION WITH H1-2 (ISOFORMS 2 AND 5)</scope>
    <scope>INTERACTION WITH GNL3 (ISOFORM 2)</scope>
    <scope>SUBCELLULAR LOCATION (ISOFORMS 1; 2 AND 5)</scope>
</reference>
<accession>Q15714</accession>
<accession>A0A087X0H8</accession>
<accession>B3KRL7</accession>
<accession>B9EGI0</accession>
<accession>O00666</accession>
<accession>Q6AHX5</accession>
<accession>Q6IBU1</accession>
<accession>Q8NCN1</accession>
<accession>Q96JS5</accession>
<proteinExistence type="evidence at protein level"/>
<evidence type="ECO:0000250" key="1">
    <source>
        <dbReference type="UniProtKB" id="P62500"/>
    </source>
</evidence>
<evidence type="ECO:0000250" key="2">
    <source>
        <dbReference type="UniProtKB" id="P62501"/>
    </source>
</evidence>
<evidence type="ECO:0000256" key="3">
    <source>
        <dbReference type="SAM" id="MobiDB-lite"/>
    </source>
</evidence>
<evidence type="ECO:0000269" key="4">
    <source>
    </source>
</evidence>
<evidence type="ECO:0000269" key="5">
    <source>
    </source>
</evidence>
<evidence type="ECO:0000269" key="6">
    <source>
    </source>
</evidence>
<evidence type="ECO:0000269" key="7">
    <source>
    </source>
</evidence>
<evidence type="ECO:0000269" key="8">
    <source>
    </source>
</evidence>
<evidence type="ECO:0000269" key="9">
    <source>
    </source>
</evidence>
<evidence type="ECO:0000269" key="10">
    <source>
    </source>
</evidence>
<evidence type="ECO:0000269" key="11">
    <source>
    </source>
</evidence>
<evidence type="ECO:0000269" key="12">
    <source>
    </source>
</evidence>
<evidence type="ECO:0000269" key="13">
    <source>
    </source>
</evidence>
<evidence type="ECO:0000303" key="14">
    <source>
    </source>
</evidence>
<evidence type="ECO:0000303" key="15">
    <source>
    </source>
</evidence>
<evidence type="ECO:0000303" key="16">
    <source>
    </source>
</evidence>
<evidence type="ECO:0000303" key="17">
    <source>
    </source>
</evidence>
<evidence type="ECO:0000303" key="18">
    <source>
    </source>
</evidence>
<evidence type="ECO:0000303" key="19">
    <source>
    </source>
</evidence>
<evidence type="ECO:0000303" key="20">
    <source>
    </source>
</evidence>
<evidence type="ECO:0000303" key="21">
    <source ref="4"/>
</evidence>
<evidence type="ECO:0000303" key="22">
    <source ref="8"/>
</evidence>
<evidence type="ECO:0000305" key="23"/>
<evidence type="ECO:0000312" key="24">
    <source>
        <dbReference type="HGNC" id="HGNC:16826"/>
    </source>
</evidence>
<evidence type="ECO:0007744" key="25">
    <source>
    </source>
</evidence>
<name>T22D1_HUMAN</name>
<sequence>MHQPPESTAAAAAAADISARKMAHPAMFPRRGSGSGSASALNAAGTGVGSNATSSEDFPPPSLLQPPPPAASSTSGPQPPPPQSLNLLSQAQLQAQPLAPGGTQMKKKSGFQITSVTPAQISASISSNNSIAEDTESYDDLDESHTEDLSSSEILDVSLSRATDLGEPERSSSEETLNNFQEAETPGAVSPNQPHLPQPHLPHLPQQNVVINGNAHPHHLHHHHQIHHGHHLQHGHHHPSHVAVASASITGGPPSSPVSRKLSTTGSSDSITPVAPTSAVSSSGSPASVMTNMRAPSTTGGIGINSVTGTSTVNNVNITAVGSFNPNVTSSMLGNVNISTSNIPSAAGVSVGPGVTSGVNVNILSGMGNGTISSSAAVSSVPNAAAGMTGGSVSSQQQQPTVNTSRFRVVKLDSSSEPFKKGRWTCTEFYEKENAVPATEGVLINKVVETVKQNPIEVTSERESTSGSSVSSSVSTLSHYTESVGSGEMGAPTVVVQQQQQQQQQQQQQPALQGVTLQQMDFGSTGPQSIPAVSIPQSISQSQISQVQLQSQELSYQQKQGLQPVPLQATMSAATGIQPSPVNVVGVTSALGQQPSISSLAQPQLPYSQAAPPVQTPLPGAPPPQQLQYGQQQPMVSTQMAPGHVKSVTQNPASEYVQQQPILQTAMSSGQPSSAGVGAGTTVIPVAQPQGIQLPVQPTAVPAQPAGASVQPVGQAPAAVSAVPTGSQIANIGQQANIPTAVQQPSTQVPPSVIQQGAPPSSQVVPPAQTGIIHQGVQTSAPSLPQQLVIASQSSLLTVPPQPQGVEPVAQGIVSQQLPAVSSLPSASSISVTSQVSSTGPSGMPSAPTNLVPPQNIAQTPATQNGNLVQSVSQPPLIATNTNLPLAQQIPLSSTQFSAQSLAQAIGSQIEDARRAAEPSLVGLPQTISGDSGGMSAVSDGSSSSLAASASLFPLKVLPLTTPLVDGEDESSSGASVVAIDNKIEQAMDLVKSHLMYAVREEVEVLKEQIKELIEKNSQLEQENNLLKTLASPEQLAQFQAQLQTGSPPATTQPQGTTQPPAQPASQGSGPTA</sequence>
<gene>
    <name evidence="24" type="primary">TSC22D1</name>
    <name type="synonym">KIAA1994</name>
    <name type="synonym">TGFB1I4</name>
    <name evidence="24" type="synonym">TSC22</name>
    <name type="ORF">hucep-2</name>
</gene>
<comment type="function">
    <text evidence="1 4 6 7 9 10 13">Transcriptional repressor (PubMed:10488076). Acts on the C-type natriuretic peptide (CNP) promoter (PubMed:9022669). Acts to promote CASP3-mediated apoptosis (PubMed:18325344). Positively regulates TGF-beta signaling by interacting with SMAD7 which inhibits binding of SMAD7 to TGFBR1, preventing recruitment of SMURF ubiquitin ligases to TGFBR1 and inhibiting SMURF-mediated ubiquitination and degradation of TGFBR1 (PubMed:21791611). Contributes to enhancement of TGF-beta signaling by binding to and modulating the transcription activator activity of SMAD4 (PubMed:15881652). Promotes TGF-beta-induced transcription of COL1A2; via its interaction with TFE3 at E-boxes in the gene proximal promoter (By similarity). Plays a role in the repression of hematopoietic precursor cell growth (By similarity). Promotes IL2 deprivation-induced apoptosis in T-lymphocytes, via repression of TSC22D3/GILZ transcription and activation of the caspase cascade (PubMed:26752201).</text>
</comment>
<comment type="function">
    <molecule>Isoform 1</molecule>
    <text evidence="1">May act to negatively regulate TGFB3 signaling and thereby inhibit cell death in mammary gland cells.</text>
</comment>
<comment type="function">
    <molecule>Isoform 2</molecule>
    <text evidence="1">Positively regulates cell death in response to TGFB3 during mammary gland involution.</text>
</comment>
<comment type="subunit">
    <text evidence="1 4 6 7 9">Forms homodimers (PubMed:10488076). Forms heterodimers (PubMed:10488076). Component of a complex composed of TSC22D1 (via N-terminus), TGFBR1 and TGFBR2; the interaction between TSC22D1 and TGFBR1 is inhibited by SMAD7 and promoted by TGFB1 (PubMed:21791611). Interacts with SMAD7; the interaction requires TGF-beta and the interaction is inhibited by TGFBR1 (PubMed:21791611). Interacts with TPT1/fortilin; interaction results in the destabilization of TSC22D1 protein and prevents TSC22D1-mediated apoptosis (PubMed:18325344). Interacts with SMAD4 (via N-terminus) (PubMed:15881652). Interacts with ACVRL1/ALK1, ACVR1/ALK2, BMPR1A/ALK3, ACVR1B/ALK4, BMPR1B/ALK6, ACVR2A/ACTRII, and BMPR2 (PubMed:21791611). Interacts with SMAD6 (PubMed:21791611). Interacts with TFE3; the interaction is enhanced in the presence of TGF-beta (By similarity).</text>
</comment>
<comment type="subunit">
    <molecule>Isoform 1</molecule>
    <text evidence="8">Forms a heterodimer with TSC22D4/THG1.</text>
</comment>
<comment type="subunit">
    <molecule>Isoform 2</molecule>
    <text evidence="4 8 11">Forms a heterodimer with TSC22D4/THG1 (PubMed:10488076, PubMed:21448135). Interacts with histone H1-2 (PubMed:34681573). Interacts with GNL3 (PubMed:34681573).</text>
</comment>
<comment type="subunit">
    <molecule>Isoform 5</molecule>
    <text evidence="11">Interacts with histone H1-2.</text>
</comment>
<comment type="interaction">
    <interactant intactId="EBI-712609">
        <id>Q15714</id>
    </interactant>
    <interactant intactId="EBI-741158">
        <id>Q96HA8</id>
        <label>NTAQ1</label>
    </interactant>
    <organismsDiffer>false</organismsDiffer>
    <experiments>4</experiments>
</comment>
<comment type="interaction">
    <interactant intactId="EBI-712609">
        <id>Q15714</id>
    </interactant>
    <interactant intactId="EBI-1783169">
        <id>P13693</id>
        <label>TPT1</label>
    </interactant>
    <organismsDiffer>false</organismsDiffer>
    <experiments>5</experiments>
</comment>
<comment type="interaction">
    <interactant intactId="EBI-12034704">
        <id>Q15714-2</id>
    </interactant>
    <interactant intactId="EBI-77613">
        <id>P05067</id>
        <label>APP</label>
    </interactant>
    <organismsDiffer>false</organismsDiffer>
    <experiments>3</experiments>
</comment>
<comment type="interaction">
    <interactant intactId="EBI-12034704">
        <id>Q15714-2</id>
    </interactant>
    <interactant intactId="EBI-641642">
        <id>Q9BVP2</id>
        <label>GNL3</label>
    </interactant>
    <organismsDiffer>false</organismsDiffer>
    <experiments>2</experiments>
</comment>
<comment type="interaction">
    <interactant intactId="EBI-12034704">
        <id>Q15714-2</id>
    </interactant>
    <interactant intactId="EBI-739467">
        <id>Q9H8Y8</id>
        <label>GORASP2</label>
    </interactant>
    <organismsDiffer>false</organismsDiffer>
    <experiments>8</experiments>
</comment>
<comment type="interaction">
    <interactant intactId="EBI-12034704">
        <id>Q15714-2</id>
    </interactant>
    <interactant intactId="EBI-741158">
        <id>Q96HA8</id>
        <label>NTAQ1</label>
    </interactant>
    <organismsDiffer>false</organismsDiffer>
    <experiments>3</experiments>
</comment>
<comment type="subcellular location">
    <subcellularLocation>
        <location evidence="9">Cytoplasm</location>
    </subcellularLocation>
    <subcellularLocation>
        <location evidence="1">Nucleus</location>
    </subcellularLocation>
    <subcellularLocation>
        <location evidence="9">Cell membrane</location>
        <topology evidence="23">Peripheral membrane protein</topology>
    </subcellularLocation>
</comment>
<comment type="subcellular location">
    <molecule>Isoform 1</molecule>
    <subcellularLocation>
        <location evidence="11">Cytoplasm</location>
    </subcellularLocation>
    <subcellularLocation>
        <location evidence="11">Nucleus</location>
    </subcellularLocation>
    <subcellularLocation>
        <location evidence="11">Mitochondrion</location>
    </subcellularLocation>
</comment>
<comment type="subcellular location">
    <molecule>Isoform 2</molecule>
    <subcellularLocation>
        <location evidence="11">Cytoplasm</location>
    </subcellularLocation>
    <subcellularLocation>
        <location evidence="11">Nucleus</location>
    </subcellularLocation>
    <subcellularLocation>
        <location evidence="11">Mitochondrion</location>
    </subcellularLocation>
</comment>
<comment type="subcellular location">
    <molecule>Isoform 5</molecule>
    <subcellularLocation>
        <location evidence="11">Cytoplasm</location>
    </subcellularLocation>
    <subcellularLocation>
        <location evidence="11">Nucleus</location>
    </subcellularLocation>
</comment>
<comment type="alternative products">
    <event type="alternative splicing"/>
    <isoform>
        <id>Q15714-1</id>
        <name>1</name>
        <name evidence="17">TSC22D1-1</name>
        <sequence type="displayed"/>
    </isoform>
    <isoform>
        <id>Q15714-2</id>
        <name>2</name>
        <name evidence="17">TSC22D1-2</name>
        <name evidence="17">TSC-22</name>
        <sequence type="described" ref="VSP_035325 VSP_035326"/>
    </isoform>
    <isoform>
        <id>Q15714-3</id>
        <name>3</name>
        <sequence type="described" ref="VSP_035324"/>
    </isoform>
    <isoform>
        <id>Q15714-4</id>
        <name>4</name>
        <sequence type="described" ref="VSP_044939 VSP_044940"/>
    </isoform>
    <isoform>
        <id>Q15714-5</id>
        <name>5</name>
        <name evidence="17">TSC22D1-3</name>
        <name evidence="17">TSC22(86)</name>
        <sequence type="described" ref="VSP_061917"/>
    </isoform>
</comment>
<comment type="tissue specificity">
    <text evidence="5 10 12">Ubiquitously expressed in adult tissues (PubMed:26752201, PubMed:8651929). Expressed in the postmitotic epithelial compartment at the top of intestinal mucosal villi (PubMed:12468551).</text>
</comment>
<comment type="developmental stage">
    <text evidence="10 12">Expressed in the fetal brain, lung, liver and kidney.</text>
</comment>
<comment type="induction">
    <text evidence="13">Induced by cytokines including TGFB1 in aortic endothelial cells.</text>
</comment>
<comment type="similarity">
    <text evidence="23">Belongs to the TSC-22/Dip/Bun family.</text>
</comment>
<comment type="sequence caution" evidence="23">
    <conflict type="erroneous initiation">
        <sequence resource="EMBL-CDS" id="BAC02703"/>
    </conflict>
</comment>
<organism>
    <name type="scientific">Homo sapiens</name>
    <name type="common">Human</name>
    <dbReference type="NCBI Taxonomy" id="9606"/>
    <lineage>
        <taxon>Eukaryota</taxon>
        <taxon>Metazoa</taxon>
        <taxon>Chordata</taxon>
        <taxon>Craniata</taxon>
        <taxon>Vertebrata</taxon>
        <taxon>Euteleostomi</taxon>
        <taxon>Mammalia</taxon>
        <taxon>Eutheria</taxon>
        <taxon>Euarchontoglires</taxon>
        <taxon>Primates</taxon>
        <taxon>Haplorrhini</taxon>
        <taxon>Catarrhini</taxon>
        <taxon>Hominidae</taxon>
        <taxon>Homo</taxon>
    </lineage>
</organism>
<protein>
    <recommendedName>
        <fullName evidence="24">TSC22 domain family protein 1</fullName>
    </recommendedName>
    <alternativeName>
        <fullName evidence="21">Cerebral protein 2</fullName>
        <shortName evidence="21">HUCEP-2</shortName>
    </alternativeName>
    <alternativeName>
        <fullName evidence="2">Regulatory protein TSC-22</fullName>
    </alternativeName>
    <alternativeName>
        <fullName evidence="2">TGFB-stimulated clone 22 homolog</fullName>
    </alternativeName>
    <alternativeName>
        <fullName evidence="24">Transforming growth factor beta-1-induced transcript 4 protein</fullName>
    </alternativeName>
</protein>